<feature type="chain" id="PRO_1000013783" description="tRNA uridine(34) hydroxylase">
    <location>
        <begin position="1"/>
        <end position="328"/>
    </location>
</feature>
<feature type="domain" description="Rhodanese" evidence="1">
    <location>
        <begin position="130"/>
        <end position="224"/>
    </location>
</feature>
<feature type="active site" description="Cysteine persulfide intermediate" evidence="1">
    <location>
        <position position="184"/>
    </location>
</feature>
<gene>
    <name evidence="1" type="primary">trhO</name>
    <name type="ordered locus">SPD_0091</name>
</gene>
<protein>
    <recommendedName>
        <fullName evidence="1">tRNA uridine(34) hydroxylase</fullName>
        <ecNumber evidence="1">1.14.-.-</ecNumber>
    </recommendedName>
    <alternativeName>
        <fullName evidence="1">tRNA hydroxylation protein O</fullName>
    </alternativeName>
</protein>
<accession>Q04MY5</accession>
<comment type="function">
    <text evidence="1">Catalyzes oxygen-dependent 5-hydroxyuridine (ho5U) modification at position 34 in tRNAs.</text>
</comment>
<comment type="catalytic activity">
    <reaction evidence="1">
        <text>uridine(34) in tRNA + AH2 + O2 = 5-hydroxyuridine(34) in tRNA + A + H2O</text>
        <dbReference type="Rhea" id="RHEA:64224"/>
        <dbReference type="Rhea" id="RHEA-COMP:11727"/>
        <dbReference type="Rhea" id="RHEA-COMP:13381"/>
        <dbReference type="ChEBI" id="CHEBI:13193"/>
        <dbReference type="ChEBI" id="CHEBI:15377"/>
        <dbReference type="ChEBI" id="CHEBI:15379"/>
        <dbReference type="ChEBI" id="CHEBI:17499"/>
        <dbReference type="ChEBI" id="CHEBI:65315"/>
        <dbReference type="ChEBI" id="CHEBI:136877"/>
    </reaction>
</comment>
<comment type="similarity">
    <text evidence="1">Belongs to the TrhO family.</text>
</comment>
<evidence type="ECO:0000255" key="1">
    <source>
        <dbReference type="HAMAP-Rule" id="MF_00469"/>
    </source>
</evidence>
<name>TRHO_STRP2</name>
<organism>
    <name type="scientific">Streptococcus pneumoniae serotype 2 (strain D39 / NCTC 7466)</name>
    <dbReference type="NCBI Taxonomy" id="373153"/>
    <lineage>
        <taxon>Bacteria</taxon>
        <taxon>Bacillati</taxon>
        <taxon>Bacillota</taxon>
        <taxon>Bacilli</taxon>
        <taxon>Lactobacillales</taxon>
        <taxon>Streptococcaceae</taxon>
        <taxon>Streptococcus</taxon>
    </lineage>
</organism>
<reference key="1">
    <citation type="journal article" date="2007" name="J. Bacteriol.">
        <title>Genome sequence of Avery's virulent serotype 2 strain D39 of Streptococcus pneumoniae and comparison with that of unencapsulated laboratory strain R6.</title>
        <authorList>
            <person name="Lanie J.A."/>
            <person name="Ng W.-L."/>
            <person name="Kazmierczak K.M."/>
            <person name="Andrzejewski T.M."/>
            <person name="Davidsen T.M."/>
            <person name="Wayne K.J."/>
            <person name="Tettelin H."/>
            <person name="Glass J.I."/>
            <person name="Winkler M.E."/>
        </authorList>
    </citation>
    <scope>NUCLEOTIDE SEQUENCE [LARGE SCALE GENOMIC DNA]</scope>
    <source>
        <strain>D39 / NCTC 7466</strain>
    </source>
</reference>
<proteinExistence type="inferred from homology"/>
<sequence>MAKDIRVLLYYLYTPIENAEQFAADHLAFCKSIGLKGRILVADEGINGTVSGDYETTQKYMDYVHSLPGMEELWFKIDEENEQAFKKMFVRYKKEIVHLGLEDNDFDNDINPLETTGAYLSPKEFKEALLDKDTVVLDTRNDYEYDLGHFRGAIRPDIRNFRELPQWVRDNKEKFMDKRVVVYCTGGVRCEKFSGWMVREGYKDVGQLHGGIATYGKDPEVQGELWDGKMYVFDERIAVDVNHVNPTIVGKDWFDGTPCERYVNCGNPFCNRRILTSEENEDKYLRGCSHECRVHPRNRYVSKNELTQAEVIERLAAIGESLDQAATV</sequence>
<dbReference type="EC" id="1.14.-.-" evidence="1"/>
<dbReference type="EMBL" id="CP000410">
    <property type="protein sequence ID" value="ABJ55429.1"/>
    <property type="molecule type" value="Genomic_DNA"/>
</dbReference>
<dbReference type="RefSeq" id="WP_001030031.1">
    <property type="nucleotide sequence ID" value="NZ_JAMLJR010000020.1"/>
</dbReference>
<dbReference type="SMR" id="Q04MY5"/>
<dbReference type="PaxDb" id="373153-SPD_0091"/>
<dbReference type="KEGG" id="spd:SPD_0091"/>
<dbReference type="eggNOG" id="COG1054">
    <property type="taxonomic scope" value="Bacteria"/>
</dbReference>
<dbReference type="HOGENOM" id="CLU_038878_1_0_9"/>
<dbReference type="BioCyc" id="SPNE373153:G1G6V-99-MONOMER"/>
<dbReference type="Proteomes" id="UP000001452">
    <property type="component" value="Chromosome"/>
</dbReference>
<dbReference type="GO" id="GO:0016705">
    <property type="term" value="F:oxidoreductase activity, acting on paired donors, with incorporation or reduction of molecular oxygen"/>
    <property type="evidence" value="ECO:0007669"/>
    <property type="project" value="UniProtKB-UniRule"/>
</dbReference>
<dbReference type="GO" id="GO:0006400">
    <property type="term" value="P:tRNA modification"/>
    <property type="evidence" value="ECO:0007669"/>
    <property type="project" value="UniProtKB-UniRule"/>
</dbReference>
<dbReference type="CDD" id="cd01518">
    <property type="entry name" value="RHOD_YceA"/>
    <property type="match status" value="1"/>
</dbReference>
<dbReference type="Gene3D" id="3.30.70.100">
    <property type="match status" value="1"/>
</dbReference>
<dbReference type="Gene3D" id="3.40.250.10">
    <property type="entry name" value="Rhodanese-like domain"/>
    <property type="match status" value="1"/>
</dbReference>
<dbReference type="HAMAP" id="MF_00469">
    <property type="entry name" value="TrhO"/>
    <property type="match status" value="1"/>
</dbReference>
<dbReference type="InterPro" id="IPR001763">
    <property type="entry name" value="Rhodanese-like_dom"/>
</dbReference>
<dbReference type="InterPro" id="IPR036873">
    <property type="entry name" value="Rhodanese-like_dom_sf"/>
</dbReference>
<dbReference type="InterPro" id="IPR022111">
    <property type="entry name" value="Rhodanese_C"/>
</dbReference>
<dbReference type="InterPro" id="IPR020936">
    <property type="entry name" value="TrhO"/>
</dbReference>
<dbReference type="InterPro" id="IPR040503">
    <property type="entry name" value="TRHO_N"/>
</dbReference>
<dbReference type="NCBIfam" id="NF001135">
    <property type="entry name" value="PRK00142.1-3"/>
    <property type="match status" value="1"/>
</dbReference>
<dbReference type="NCBIfam" id="NF001137">
    <property type="entry name" value="PRK00142.1-5"/>
    <property type="match status" value="1"/>
</dbReference>
<dbReference type="PANTHER" id="PTHR43268:SF3">
    <property type="entry name" value="RHODANESE-LIKE DOMAIN-CONTAINING PROTEIN 7-RELATED"/>
    <property type="match status" value="1"/>
</dbReference>
<dbReference type="PANTHER" id="PTHR43268">
    <property type="entry name" value="THIOSULFATE SULFURTRANSFERASE/RHODANESE-LIKE DOMAIN-CONTAINING PROTEIN 2"/>
    <property type="match status" value="1"/>
</dbReference>
<dbReference type="Pfam" id="PF00581">
    <property type="entry name" value="Rhodanese"/>
    <property type="match status" value="1"/>
</dbReference>
<dbReference type="Pfam" id="PF12368">
    <property type="entry name" value="Rhodanese_C"/>
    <property type="match status" value="1"/>
</dbReference>
<dbReference type="Pfam" id="PF17773">
    <property type="entry name" value="UPF0176_N"/>
    <property type="match status" value="1"/>
</dbReference>
<dbReference type="SMART" id="SM00450">
    <property type="entry name" value="RHOD"/>
    <property type="match status" value="1"/>
</dbReference>
<dbReference type="SUPFAM" id="SSF52821">
    <property type="entry name" value="Rhodanese/Cell cycle control phosphatase"/>
    <property type="match status" value="1"/>
</dbReference>
<dbReference type="PROSITE" id="PS50206">
    <property type="entry name" value="RHODANESE_3"/>
    <property type="match status" value="1"/>
</dbReference>
<keyword id="KW-0560">Oxidoreductase</keyword>
<keyword id="KW-1185">Reference proteome</keyword>
<keyword id="KW-0819">tRNA processing</keyword>